<protein>
    <recommendedName>
        <fullName>Centrosomal protein of 120 kDa</fullName>
        <shortName>Cep120</shortName>
    </recommendedName>
    <alternativeName>
        <fullName>Coiled-coil domain-containing protein 100</fullName>
    </alternativeName>
</protein>
<comment type="function">
    <text evidence="1 8">Plays a role in the microtubule-dependent coupling of the nucleus and the centrosome. Involved in the processes that regulate centrosome-mediated interkinetic nuclear migration (INM) of neural progenitors and for proper positioning of neurons during brain development. Also implicated in the migration and selfrenewal of neural progenitors. Required for centriole duplication and maturation during mitosis and subsequent ciliogenesis (By similarity). Required for the recruitment of CEP295 to the proximal end of new-born centrioles at the centriolar microtubule wall during early S phase in a PLK4-dependent manner (PubMed:27185865).</text>
</comment>
<comment type="subunit">
    <text evidence="1">Interacts with TACC2, TACC3, CCDC52, TALPID3.</text>
</comment>
<comment type="interaction">
    <interactant intactId="EBI-2563015">
        <id>Q8N960</id>
    </interactant>
    <interactant intactId="EBI-1059012">
        <id>Q5TB80</id>
        <label>CEP162</label>
    </interactant>
    <organismsDiffer>false</organismsDiffer>
    <experiments>6</experiments>
</comment>
<comment type="subcellular location">
    <subcellularLocation>
        <location evidence="5 10">Cytoplasm</location>
        <location evidence="5 10">Cytoskeleton</location>
        <location evidence="5 10">Microtubule organizing center</location>
        <location evidence="5 10">Centrosome</location>
    </subcellularLocation>
    <text evidence="1">Regulates the localization of TACC3 to the centrosome in neural progenitors in vivo.</text>
</comment>
<comment type="alternative products">
    <event type="alternative splicing"/>
    <isoform>
        <id>Q8N960-1</id>
        <name>1</name>
        <sequence type="displayed"/>
    </isoform>
    <isoform>
        <id>Q8N960-2</id>
        <name>2</name>
        <sequence type="described" ref="VSP_035123"/>
    </isoform>
    <isoform>
        <id>Q8N960-3</id>
        <name>3</name>
        <sequence type="described" ref="VSP_035124 VSP_035125"/>
    </isoform>
</comment>
<comment type="disease" evidence="7">
    <disease id="DI-04389">
        <name>Short-rib thoracic dysplasia 13 with or without polydactyly</name>
        <acronym>SRTD13</acronym>
        <description>A form of short-rib thoracic dysplasia, a group of autosomal recessive ciliopathies that are characterized by a constricted thoracic cage, short ribs, shortened tubular bones, and a 'trident' appearance of the acetabular roof. Polydactyly is variably present. Non-skeletal involvement can include cleft lip/palate as well as anomalies of major organs such as the brain, eye, heart, kidneys, liver, pancreas, intestines, and genitalia. Some forms of the disease are lethal in the neonatal period due to respiratory insufficiency secondary to a severely restricted thoracic cage, whereas others are compatible with life. Disease spectrum encompasses Ellis-van Creveld syndrome, asphyxiating thoracic dystrophy (Jeune syndrome), Mainzer-Saldino syndrome, and short rib-polydactyly syndrome.</description>
        <dbReference type="MIM" id="616300"/>
    </disease>
    <text>The disease is caused by variants affecting the gene represented in this entry.</text>
</comment>
<comment type="disease" evidence="9">
    <disease id="DI-05136">
        <name>Joubert syndrome 31</name>
        <acronym>JBTS31</acronym>
        <description>A form of Joubert syndrome, a disorder presenting with cerebellar ataxia, oculomotor apraxia, hypotonia, neonatal breathing abnormalities and psychomotor delay. Neuroradiologically, it is characterized by cerebellar vermian hypoplasia/aplasia, thickened and reoriented superior cerebellar peduncles, and an abnormally large interpeduncular fossa, giving the appearance of a molar tooth on transaxial slices (molar tooth sign). Additional variable features include retinal dystrophy, renal disease, liver fibrosis, and polydactyly. JBTS31 inheritance is autosomal recessive.</description>
        <dbReference type="MIM" id="617761"/>
    </disease>
    <text>The disease is caused by variants affecting the gene represented in this entry.</text>
</comment>
<comment type="miscellaneous">
    <molecule>Isoform 3</molecule>
    <text evidence="13">May be produced at very low levels due to a premature stop codon in the mRNA, leading to nonsense-mediated mRNA decay.</text>
</comment>
<comment type="similarity">
    <text evidence="13">Belongs to the CEP120 family.</text>
</comment>
<comment type="sequence caution" evidence="13">
    <conflict type="erroneous initiation">
        <sequence resource="EMBL-CDS" id="BAC04155"/>
    </conflict>
    <text>Truncated N-terminus.</text>
</comment>
<comment type="sequence caution" evidence="13">
    <conflict type="erroneous initiation">
        <sequence resource="EMBL-CDS" id="CAH10561"/>
    </conflict>
    <text>Truncated N-terminus.</text>
</comment>
<evidence type="ECO:0000250" key="1">
    <source>
        <dbReference type="UniProtKB" id="Q7TSG1"/>
    </source>
</evidence>
<evidence type="ECO:0000255" key="2"/>
<evidence type="ECO:0000255" key="3">
    <source>
        <dbReference type="PROSITE-ProRule" id="PRU00041"/>
    </source>
</evidence>
<evidence type="ECO:0000256" key="4">
    <source>
        <dbReference type="SAM" id="MobiDB-lite"/>
    </source>
</evidence>
<evidence type="ECO:0000269" key="5">
    <source>
    </source>
</evidence>
<evidence type="ECO:0000269" key="6">
    <source>
    </source>
</evidence>
<evidence type="ECO:0000269" key="7">
    <source>
    </source>
</evidence>
<evidence type="ECO:0000269" key="8">
    <source>
    </source>
</evidence>
<evidence type="ECO:0000269" key="9">
    <source>
    </source>
</evidence>
<evidence type="ECO:0000269" key="10">
    <source>
    </source>
</evidence>
<evidence type="ECO:0000303" key="11">
    <source>
    </source>
</evidence>
<evidence type="ECO:0000303" key="12">
    <source>
    </source>
</evidence>
<evidence type="ECO:0000305" key="13"/>
<evidence type="ECO:0007829" key="14">
    <source>
        <dbReference type="PDB" id="4ICX"/>
    </source>
</evidence>
<evidence type="ECO:0007829" key="15">
    <source>
        <dbReference type="PDB" id="6FLJ"/>
    </source>
</evidence>
<evidence type="ECO:0007829" key="16">
    <source>
        <dbReference type="PDB" id="6FLK"/>
    </source>
</evidence>
<feature type="chain" id="PRO_0000348262" description="Centrosomal protein of 120 kDa">
    <location>
        <begin position="1"/>
        <end position="986"/>
    </location>
</feature>
<feature type="domain" description="C2 1" evidence="3">
    <location>
        <begin position="1"/>
        <end position="112"/>
    </location>
</feature>
<feature type="domain" description="C2 2" evidence="3">
    <location>
        <begin position="433"/>
        <end position="566"/>
    </location>
</feature>
<feature type="region of interest" description="Disordered" evidence="4">
    <location>
        <begin position="350"/>
        <end position="424"/>
    </location>
</feature>
<feature type="region of interest" description="Disordered" evidence="4">
    <location>
        <begin position="914"/>
        <end position="937"/>
    </location>
</feature>
<feature type="coiled-coil region" evidence="2">
    <location>
        <begin position="669"/>
        <end position="925"/>
    </location>
</feature>
<feature type="compositionally biased region" description="Polar residues" evidence="4">
    <location>
        <begin position="377"/>
        <end position="394"/>
    </location>
</feature>
<feature type="compositionally biased region" description="Polar residues" evidence="4">
    <location>
        <begin position="915"/>
        <end position="924"/>
    </location>
</feature>
<feature type="modified residue" description="Phosphoserine" evidence="1">
    <location>
        <position position="935"/>
    </location>
</feature>
<feature type="splice variant" id="VSP_035123" description="In isoform 2." evidence="11">
    <location>
        <begin position="1"/>
        <end position="26"/>
    </location>
</feature>
<feature type="splice variant" id="VSP_035124" description="In isoform 3." evidence="12">
    <original>SLIELKTQNEHEPEHSKKKVLTPIKEKTLTGPKS</original>
    <variation>DAFWYSALDIIFPLFIFLFLVLDAIRKFANYEEK</variation>
    <location>
        <begin position="347"/>
        <end position="380"/>
    </location>
</feature>
<feature type="splice variant" id="VSP_035125" description="In isoform 3." evidence="12">
    <location>
        <begin position="381"/>
        <end position="986"/>
    </location>
</feature>
<feature type="sequence variant" id="VAR_077553" description="In JBTS31; uncertain significance; dbSNP:rs1554104276." evidence="9">
    <original>V</original>
    <variation>A</variation>
    <location>
        <position position="194"/>
    </location>
</feature>
<feature type="sequence variant" id="VAR_073672" description="In SRTD13; also found in a patient with more complex ciliopathy; dbSNP:rs367600930." evidence="7 9">
    <original>A</original>
    <variation>P</variation>
    <location>
        <position position="199"/>
    </location>
</feature>
<feature type="sequence variant" id="VAR_077554" description="In JBTS31; uncertain significance; dbSNP:rs775080726." evidence="9">
    <original>A</original>
    <variation>V</variation>
    <location>
        <position position="549"/>
    </location>
</feature>
<feature type="sequence variant" id="VAR_046126" description="In dbSNP:rs6595440." evidence="6">
    <original>L</original>
    <variation>V</variation>
    <location>
        <position position="602"/>
    </location>
</feature>
<feature type="sequence variant" id="VAR_077555" description="In JBTS31; uncertain significance; dbSNP:rs114280473." evidence="9">
    <original>L</original>
    <variation>F</variation>
    <location>
        <position position="712"/>
    </location>
</feature>
<feature type="sequence variant" id="VAR_077556" description="In JBTS31; uncertain significance; dbSNP:rs1554102026." evidence="9">
    <original>L</original>
    <variation>P</variation>
    <location>
        <position position="726"/>
    </location>
</feature>
<feature type="sequence variant" id="VAR_046127" description="In dbSNP:rs1047437.">
    <original>Q</original>
    <variation>H</variation>
    <location>
        <position position="879"/>
    </location>
</feature>
<feature type="sequence variant" id="VAR_046128" description="In dbSNP:rs2303721.">
    <original>V</original>
    <variation>I</variation>
    <location>
        <position position="936"/>
    </location>
</feature>
<feature type="sequence variant" id="VAR_046129" description="In dbSNP:rs2303720.">
    <original>R</original>
    <variation>H</variation>
    <location>
        <position position="947"/>
    </location>
</feature>
<feature type="sequence variant" id="VAR_077557" description="Found in a patient with Meckel syndrome; uncertain significance; dbSNP:rs1554098663." evidence="9">
    <original>I</original>
    <variation>S</variation>
    <location>
        <position position="975"/>
    </location>
</feature>
<feature type="sequence conflict" description="In Ref. 3; BAC04596." evidence="13" ref="3">
    <original>L</original>
    <variation>F</variation>
    <location>
        <position position="212"/>
    </location>
</feature>
<feature type="sequence conflict" description="In Ref. 3; BAC04596." evidence="13" ref="3">
    <original>E</original>
    <variation>G</variation>
    <location>
        <position position="246"/>
    </location>
</feature>
<feature type="sequence conflict" description="In Ref. 4; CAH10371." evidence="13" ref="4">
    <original>H</original>
    <variation>R</variation>
    <location>
        <position position="301"/>
    </location>
</feature>
<feature type="sequence conflict" description="In Ref. 3; BAC04596." evidence="13" ref="3">
    <original>Q</original>
    <variation>L</variation>
    <location>
        <position position="785"/>
    </location>
</feature>
<feature type="helix" evidence="14">
    <location>
        <begin position="4"/>
        <end position="6"/>
    </location>
</feature>
<feature type="strand" evidence="15">
    <location>
        <begin position="8"/>
        <end position="19"/>
    </location>
</feature>
<feature type="strand" evidence="15">
    <location>
        <begin position="27"/>
        <end position="34"/>
    </location>
</feature>
<feature type="strand" evidence="15">
    <location>
        <begin position="37"/>
        <end position="40"/>
    </location>
</feature>
<feature type="strand" evidence="15">
    <location>
        <begin position="47"/>
        <end position="49"/>
    </location>
</feature>
<feature type="strand" evidence="15">
    <location>
        <begin position="51"/>
        <end position="60"/>
    </location>
</feature>
<feature type="helix" evidence="15">
    <location>
        <begin position="62"/>
        <end position="71"/>
    </location>
</feature>
<feature type="strand" evidence="15">
    <location>
        <begin position="74"/>
        <end position="83"/>
    </location>
</feature>
<feature type="turn" evidence="15">
    <location>
        <begin position="84"/>
        <end position="87"/>
    </location>
</feature>
<feature type="strand" evidence="15">
    <location>
        <begin position="88"/>
        <end position="98"/>
    </location>
</feature>
<feature type="helix" evidence="15">
    <location>
        <begin position="99"/>
        <end position="101"/>
    </location>
</feature>
<feature type="strand" evidence="15">
    <location>
        <begin position="110"/>
        <end position="113"/>
    </location>
</feature>
<feature type="strand" evidence="15">
    <location>
        <begin position="125"/>
        <end position="134"/>
    </location>
</feature>
<feature type="strand" evidence="16">
    <location>
        <begin position="452"/>
        <end position="465"/>
    </location>
</feature>
<feature type="strand" evidence="16">
    <location>
        <begin position="472"/>
        <end position="478"/>
    </location>
</feature>
<feature type="helix" evidence="16">
    <location>
        <begin position="481"/>
        <end position="483"/>
    </location>
</feature>
<feature type="strand" evidence="16">
    <location>
        <begin position="495"/>
        <end position="497"/>
    </location>
</feature>
<feature type="strand" evidence="16">
    <location>
        <begin position="502"/>
        <end position="504"/>
    </location>
</feature>
<feature type="strand" evidence="16">
    <location>
        <begin position="509"/>
        <end position="516"/>
    </location>
</feature>
<feature type="helix" evidence="16">
    <location>
        <begin position="518"/>
        <end position="527"/>
    </location>
</feature>
<feature type="strand" evidence="16">
    <location>
        <begin position="530"/>
        <end position="536"/>
    </location>
</feature>
<feature type="strand" evidence="16">
    <location>
        <begin position="544"/>
        <end position="551"/>
    </location>
</feature>
<feature type="helix" evidence="16">
    <location>
        <begin position="553"/>
        <end position="558"/>
    </location>
</feature>
<feature type="strand" evidence="16">
    <location>
        <begin position="562"/>
        <end position="565"/>
    </location>
</feature>
<feature type="strand" evidence="16">
    <location>
        <begin position="569"/>
        <end position="584"/>
    </location>
</feature>
<feature type="strand" evidence="16">
    <location>
        <begin position="592"/>
        <end position="607"/>
    </location>
</feature>
<sequence>MVSKSDQLLIVVSILEGRHFPKRPKHMLVVEAKFDGEQLATDPVDHTDQPEFATELAWEIDRKALHQHRLQRTPIKLQCFALDPVTSAKETIGYIVLDLRTAQETKQAPKWYQLLSNKYTKFKSEIQISIALETDTKPPVDSFKAKGAPPRDGKVPAILAGLDPRDIVAVLNEEGGYHQIGPAEYCTDSFIMSVTIAFATQLEQLIPCTMKLPERQPEFFFYYSLLGNDVTNEPFNDLINPNFEPERASVRIRSSVEILRVYLALQSKLQIHLCCGDQSLGSTEIPLTGLLKKGSTEINQHPVTVEGAFTLDPPNRAKQKLAPIPVELAPTVGVSVALQREGIDSQSLIELKTQNEHEPEHSKKKVLTPIKEKTLTGPKSPTVSPVPSHNQSPPTKDDATESEVESLQYDKDTKPNPKASSSVPASLAQLVTTSNASEVASGQKIAVPATSHHFCFSIDLRSIHALEIGFPINCILRYSYPFFGSAAPIMTNPPVEVRKNMEVFLPQSYCAFDFATMPHQLQDTFLRIPLLVELWHKDKMSKDLLLGIARIQLSNILSSEKTRFLGSNGEQCWRQTYSESVPVIAAQGSNNRIADLSYTVTLEDYGLVKMREIFISDSSQGVSAVQQKPSSLPPAPCPSEIQTEPRETLEYKAALELEMWKEMQEDIFENQLKQKELAHMQALAEEWKKRDRERESLVKKKVAEYTILEGKLQKTLIDLEKREQQLASVESELQREKKELQSERQRNLQELQDSIRRAKEDCIHQVELERLKIKQLEEDKHRLQQQLNDAENKYKILEKEFQQFKDQQNNKPEIRLQSEINLLTLEKVELERKLESATKSKLHYKQQWGRALKELARLKQREQESQMARLKKQQEELEQMRLRYLAAEEKDTVKTERQELLDIRNELNRLRQQEQKQYQDSTEIASGKKDGPHGSVLEEGLDDYLTRLIEERDTLMRTGVYNHEDRIISELDRQIREILAKSNASN</sequence>
<reference key="1">
    <citation type="journal article" date="2004" name="Nature">
        <title>The DNA sequence and comparative analysis of human chromosome 5.</title>
        <authorList>
            <person name="Schmutz J."/>
            <person name="Martin J."/>
            <person name="Terry A."/>
            <person name="Couronne O."/>
            <person name="Grimwood J."/>
            <person name="Lowry S."/>
            <person name="Gordon L.A."/>
            <person name="Scott D."/>
            <person name="Xie G."/>
            <person name="Huang W."/>
            <person name="Hellsten U."/>
            <person name="Tran-Gyamfi M."/>
            <person name="She X."/>
            <person name="Prabhakar S."/>
            <person name="Aerts A."/>
            <person name="Altherr M."/>
            <person name="Bajorek E."/>
            <person name="Black S."/>
            <person name="Branscomb E."/>
            <person name="Caoile C."/>
            <person name="Challacombe J.F."/>
            <person name="Chan Y.M."/>
            <person name="Denys M."/>
            <person name="Detter J.C."/>
            <person name="Escobar J."/>
            <person name="Flowers D."/>
            <person name="Fotopulos D."/>
            <person name="Glavina T."/>
            <person name="Gomez M."/>
            <person name="Gonzales E."/>
            <person name="Goodstein D."/>
            <person name="Grigoriev I."/>
            <person name="Groza M."/>
            <person name="Hammon N."/>
            <person name="Hawkins T."/>
            <person name="Haydu L."/>
            <person name="Israni S."/>
            <person name="Jett J."/>
            <person name="Kadner K."/>
            <person name="Kimball H."/>
            <person name="Kobayashi A."/>
            <person name="Lopez F."/>
            <person name="Lou Y."/>
            <person name="Martinez D."/>
            <person name="Medina C."/>
            <person name="Morgan J."/>
            <person name="Nandkeshwar R."/>
            <person name="Noonan J.P."/>
            <person name="Pitluck S."/>
            <person name="Pollard M."/>
            <person name="Predki P."/>
            <person name="Priest J."/>
            <person name="Ramirez L."/>
            <person name="Retterer J."/>
            <person name="Rodriguez A."/>
            <person name="Rogers S."/>
            <person name="Salamov A."/>
            <person name="Salazar A."/>
            <person name="Thayer N."/>
            <person name="Tice H."/>
            <person name="Tsai M."/>
            <person name="Ustaszewska A."/>
            <person name="Vo N."/>
            <person name="Wheeler J."/>
            <person name="Wu K."/>
            <person name="Yang J."/>
            <person name="Dickson M."/>
            <person name="Cheng J.-F."/>
            <person name="Eichler E.E."/>
            <person name="Olsen A."/>
            <person name="Pennacchio L.A."/>
            <person name="Rokhsar D.S."/>
            <person name="Richardson P."/>
            <person name="Lucas S.M."/>
            <person name="Myers R.M."/>
            <person name="Rubin E.M."/>
        </authorList>
    </citation>
    <scope>NUCLEOTIDE SEQUENCE [LARGE SCALE GENOMIC DNA]</scope>
</reference>
<reference key="2">
    <citation type="journal article" date="2004" name="Genome Res.">
        <title>The status, quality, and expansion of the NIH full-length cDNA project: the Mammalian Gene Collection (MGC).</title>
        <authorList>
            <consortium name="The MGC Project Team"/>
        </authorList>
    </citation>
    <scope>NUCLEOTIDE SEQUENCE [LARGE SCALE MRNA] (ISOFORM 3)</scope>
    <source>
        <tissue>Testis</tissue>
    </source>
</reference>
<reference key="3">
    <citation type="journal article" date="2004" name="Nat. Genet.">
        <title>Complete sequencing and characterization of 21,243 full-length human cDNAs.</title>
        <authorList>
            <person name="Ota T."/>
            <person name="Suzuki Y."/>
            <person name="Nishikawa T."/>
            <person name="Otsuki T."/>
            <person name="Sugiyama T."/>
            <person name="Irie R."/>
            <person name="Wakamatsu A."/>
            <person name="Hayashi K."/>
            <person name="Sato H."/>
            <person name="Nagai K."/>
            <person name="Kimura K."/>
            <person name="Makita H."/>
            <person name="Sekine M."/>
            <person name="Obayashi M."/>
            <person name="Nishi T."/>
            <person name="Shibahara T."/>
            <person name="Tanaka T."/>
            <person name="Ishii S."/>
            <person name="Yamamoto J."/>
            <person name="Saito K."/>
            <person name="Kawai Y."/>
            <person name="Isono Y."/>
            <person name="Nakamura Y."/>
            <person name="Nagahari K."/>
            <person name="Murakami K."/>
            <person name="Yasuda T."/>
            <person name="Iwayanagi T."/>
            <person name="Wagatsuma M."/>
            <person name="Shiratori A."/>
            <person name="Sudo H."/>
            <person name="Hosoiri T."/>
            <person name="Kaku Y."/>
            <person name="Kodaira H."/>
            <person name="Kondo H."/>
            <person name="Sugawara M."/>
            <person name="Takahashi M."/>
            <person name="Kanda K."/>
            <person name="Yokoi T."/>
            <person name="Furuya T."/>
            <person name="Kikkawa E."/>
            <person name="Omura Y."/>
            <person name="Abe K."/>
            <person name="Kamihara K."/>
            <person name="Katsuta N."/>
            <person name="Sato K."/>
            <person name="Tanikawa M."/>
            <person name="Yamazaki M."/>
            <person name="Ninomiya K."/>
            <person name="Ishibashi T."/>
            <person name="Yamashita H."/>
            <person name="Murakawa K."/>
            <person name="Fujimori K."/>
            <person name="Tanai H."/>
            <person name="Kimata M."/>
            <person name="Watanabe M."/>
            <person name="Hiraoka S."/>
            <person name="Chiba Y."/>
            <person name="Ishida S."/>
            <person name="Ono Y."/>
            <person name="Takiguchi S."/>
            <person name="Watanabe S."/>
            <person name="Yosida M."/>
            <person name="Hotuta T."/>
            <person name="Kusano J."/>
            <person name="Kanehori K."/>
            <person name="Takahashi-Fujii A."/>
            <person name="Hara H."/>
            <person name="Tanase T.-O."/>
            <person name="Nomura Y."/>
            <person name="Togiya S."/>
            <person name="Komai F."/>
            <person name="Hara R."/>
            <person name="Takeuchi K."/>
            <person name="Arita M."/>
            <person name="Imose N."/>
            <person name="Musashino K."/>
            <person name="Yuuki H."/>
            <person name="Oshima A."/>
            <person name="Sasaki N."/>
            <person name="Aotsuka S."/>
            <person name="Yoshikawa Y."/>
            <person name="Matsunawa H."/>
            <person name="Ichihara T."/>
            <person name="Shiohata N."/>
            <person name="Sano S."/>
            <person name="Moriya S."/>
            <person name="Momiyama H."/>
            <person name="Satoh N."/>
            <person name="Takami S."/>
            <person name="Terashima Y."/>
            <person name="Suzuki O."/>
            <person name="Nakagawa S."/>
            <person name="Senoh A."/>
            <person name="Mizoguchi H."/>
            <person name="Goto Y."/>
            <person name="Shimizu F."/>
            <person name="Wakebe H."/>
            <person name="Hishigaki H."/>
            <person name="Watanabe T."/>
            <person name="Sugiyama A."/>
            <person name="Takemoto M."/>
            <person name="Kawakami B."/>
            <person name="Yamazaki M."/>
            <person name="Watanabe K."/>
            <person name="Kumagai A."/>
            <person name="Itakura S."/>
            <person name="Fukuzumi Y."/>
            <person name="Fujimori Y."/>
            <person name="Komiyama M."/>
            <person name="Tashiro H."/>
            <person name="Tanigami A."/>
            <person name="Fujiwara T."/>
            <person name="Ono T."/>
            <person name="Yamada K."/>
            <person name="Fujii Y."/>
            <person name="Ozaki K."/>
            <person name="Hirao M."/>
            <person name="Ohmori Y."/>
            <person name="Kawabata A."/>
            <person name="Hikiji T."/>
            <person name="Kobatake N."/>
            <person name="Inagaki H."/>
            <person name="Ikema Y."/>
            <person name="Okamoto S."/>
            <person name="Okitani R."/>
            <person name="Kawakami T."/>
            <person name="Noguchi S."/>
            <person name="Itoh T."/>
            <person name="Shigeta K."/>
            <person name="Senba T."/>
            <person name="Matsumura K."/>
            <person name="Nakajima Y."/>
            <person name="Mizuno T."/>
            <person name="Morinaga M."/>
            <person name="Sasaki M."/>
            <person name="Togashi T."/>
            <person name="Oyama M."/>
            <person name="Hata H."/>
            <person name="Watanabe M."/>
            <person name="Komatsu T."/>
            <person name="Mizushima-Sugano J."/>
            <person name="Satoh T."/>
            <person name="Shirai Y."/>
            <person name="Takahashi Y."/>
            <person name="Nakagawa K."/>
            <person name="Okumura K."/>
            <person name="Nagase T."/>
            <person name="Nomura N."/>
            <person name="Kikuchi H."/>
            <person name="Masuho Y."/>
            <person name="Yamashita R."/>
            <person name="Nakai K."/>
            <person name="Yada T."/>
            <person name="Nakamura Y."/>
            <person name="Ohara O."/>
            <person name="Isogai T."/>
            <person name="Sugano S."/>
        </authorList>
    </citation>
    <scope>NUCLEOTIDE SEQUENCE [LARGE SCALE MRNA] OF 1-870 (ISOFORM 2)</scope>
    <scope>NUCLEOTIDE SEQUENCE [LARGE SCALE MRNA] OF 401-986 (ISOFORMS 1/2)</scope>
    <scope>VARIANT VAL-602</scope>
    <source>
        <tissue>Brain</tissue>
        <tissue>Testis</tissue>
    </source>
</reference>
<reference key="4">
    <citation type="journal article" date="2007" name="BMC Genomics">
        <title>The full-ORF clone resource of the German cDNA consortium.</title>
        <authorList>
            <person name="Bechtel S."/>
            <person name="Rosenfelder H."/>
            <person name="Duda A."/>
            <person name="Schmidt C.P."/>
            <person name="Ernst U."/>
            <person name="Wellenreuther R."/>
            <person name="Mehrle A."/>
            <person name="Schuster C."/>
            <person name="Bahr A."/>
            <person name="Bloecker H."/>
            <person name="Heubner D."/>
            <person name="Hoerlein A."/>
            <person name="Michel G."/>
            <person name="Wedler H."/>
            <person name="Koehrer K."/>
            <person name="Ottenwaelder B."/>
            <person name="Poustka A."/>
            <person name="Wiemann S."/>
            <person name="Schupp I."/>
        </authorList>
    </citation>
    <scope>NUCLEOTIDE SEQUENCE [LARGE SCALE MRNA] OF 154-346 AND 498-986 (ISOFORMS 1/2)</scope>
    <source>
        <tissue>Salivary gland</tissue>
        <tissue>Testis</tissue>
    </source>
</reference>
<reference key="5">
    <citation type="journal article" date="2003" name="Nature">
        <title>Proteomic characterization of the human centrosome by protein correlation profiling.</title>
        <authorList>
            <person name="Andersen J.S."/>
            <person name="Wilkinson C.J."/>
            <person name="Mayor T."/>
            <person name="Mortensen P."/>
            <person name="Nigg E.A."/>
            <person name="Mann M."/>
        </authorList>
    </citation>
    <scope>IDENTIFICATION BY MASS SPECTROMETRY</scope>
    <scope>SUBCELLULAR LOCATION [LARGE SCALE ANALYSIS]</scope>
    <source>
        <tissue>Lymphoblast</tissue>
    </source>
</reference>
<reference key="6">
    <citation type="journal article" date="2013" name="J. Proteome Res.">
        <title>Toward a comprehensive characterization of a human cancer cell phosphoproteome.</title>
        <authorList>
            <person name="Zhou H."/>
            <person name="Di Palma S."/>
            <person name="Preisinger C."/>
            <person name="Peng M."/>
            <person name="Polat A.N."/>
            <person name="Heck A.J."/>
            <person name="Mohammed S."/>
        </authorList>
    </citation>
    <scope>IDENTIFICATION BY MASS SPECTROMETRY [LARGE SCALE ANALYSIS]</scope>
    <source>
        <tissue>Erythroleukemia</tissue>
    </source>
</reference>
<reference key="7">
    <citation type="journal article" date="2014" name="J. Proteomics">
        <title>An enzyme assisted RP-RPLC approach for in-depth analysis of human liver phosphoproteome.</title>
        <authorList>
            <person name="Bian Y."/>
            <person name="Song C."/>
            <person name="Cheng K."/>
            <person name="Dong M."/>
            <person name="Wang F."/>
            <person name="Huang J."/>
            <person name="Sun D."/>
            <person name="Wang L."/>
            <person name="Ye M."/>
            <person name="Zou H."/>
        </authorList>
    </citation>
    <scope>IDENTIFICATION BY MASS SPECTROMETRY [LARGE SCALE ANALYSIS]</scope>
    <source>
        <tissue>Liver</tissue>
    </source>
</reference>
<reference key="8">
    <citation type="journal article" date="2015" name="Hum. Mol. Genet.">
        <title>A founder CEP120 mutation in Jeune asphyxiating thoracic dystrophy expands the role of centriolar proteins in skeletal ciliopathies.</title>
        <authorList>
            <consortium name="UK10K Consortium"/>
            <person name="Shaheen R."/>
            <person name="Schmidts M."/>
            <person name="Faqeih E."/>
            <person name="Hashem A."/>
            <person name="Lausch E."/>
            <person name="Holder I."/>
            <person name="Superti-Furga A."/>
            <person name="Mitchison H.M."/>
            <person name="Almoisheer A."/>
            <person name="Alamro R."/>
            <person name="Alshiddi T."/>
            <person name="Alzahrani F."/>
            <person name="Beales P.L."/>
            <person name="Alkuraya F.S."/>
        </authorList>
    </citation>
    <scope>INVOLVEMENT IN SRTD13</scope>
    <scope>VARIANT SRTD13 PRO-199</scope>
</reference>
<reference key="9">
    <citation type="journal article" date="2016" name="J. Cell Sci.">
        <title>CEP295 interacts with microtubules and is required for centriole elongation.</title>
        <authorList>
            <person name="Chang C.W."/>
            <person name="Hsu W.B."/>
            <person name="Tsai J.J."/>
            <person name="Tang C.J."/>
            <person name="Tang T.K."/>
        </authorList>
    </citation>
    <scope>FUNCTION</scope>
</reference>
<reference key="10">
    <citation type="journal article" date="2016" name="J. Med. Genet.">
        <title>Mutations in CEP120 cause Joubert syndrome as well as complex ciliopathy phenotypes.</title>
        <authorList>
            <person name="Roosing S."/>
            <person name="Romani M."/>
            <person name="Isrie M."/>
            <person name="Rosti R.O."/>
            <person name="Micalizzi A."/>
            <person name="Musaev D."/>
            <person name="Mazza T."/>
            <person name="Al-Gazali L."/>
            <person name="Altunoglu U."/>
            <person name="Boltshauser E."/>
            <person name="D'Arrigo S."/>
            <person name="De Keersmaecker B."/>
            <person name="Kayserili H."/>
            <person name="Brandenberger S."/>
            <person name="Kraoua I."/>
            <person name="Mark P.R."/>
            <person name="McKanna T."/>
            <person name="Van Keirsbilck J."/>
            <person name="Moerman P."/>
            <person name="Poretti A."/>
            <person name="Puri R."/>
            <person name="Van Esch H."/>
            <person name="Gleeson J.G."/>
            <person name="Valente E.M."/>
        </authorList>
    </citation>
    <scope>INVOLVEMENT IN JBTS31</scope>
    <scope>VARIANTS JBTS31 ALA-194; VAL-549; PHE-712 AND PRO-726</scope>
    <scope>VARIANTS PRO-199 AND SER-975</scope>
</reference>
<reference key="11">
    <citation type="journal article" date="2023" name="IScience">
        <title>Centrosomal protein 120 promotes centrosome amplification and gastric cancer progression via USP54-mediated deubiquitination of PLK4.</title>
        <authorList>
            <person name="Zhang C."/>
            <person name="Ma X."/>
            <person name="Wei G."/>
            <person name="Zhu X."/>
            <person name="Hu P."/>
            <person name="Chen X."/>
            <person name="Wang D."/>
            <person name="Li Y."/>
            <person name="Ruan T."/>
            <person name="Zhang W."/>
            <person name="Tao K."/>
            <person name="Wu C."/>
        </authorList>
    </citation>
    <scope>SUBCELLULAR LOCATION</scope>
</reference>
<accession>Q8N960</accession>
<accession>Q6AI52</accession>
<accession>Q6AW89</accession>
<accession>Q8IWB5</accession>
<accession>Q8N9Y0</accession>
<accession>Q8NDE8</accession>
<name>CE120_HUMAN</name>
<keyword id="KW-0002">3D-structure</keyword>
<keyword id="KW-0025">Alternative splicing</keyword>
<keyword id="KW-1186">Ciliopathy</keyword>
<keyword id="KW-0175">Coiled coil</keyword>
<keyword id="KW-0963">Cytoplasm</keyword>
<keyword id="KW-0206">Cytoskeleton</keyword>
<keyword id="KW-0225">Disease variant</keyword>
<keyword id="KW-0979">Joubert syndrome</keyword>
<keyword id="KW-0597">Phosphoprotein</keyword>
<keyword id="KW-1267">Proteomics identification</keyword>
<keyword id="KW-1185">Reference proteome</keyword>
<keyword id="KW-0677">Repeat</keyword>
<gene>
    <name type="primary">CEP120</name>
    <name type="synonym">CCDC100</name>
</gene>
<proteinExistence type="evidence at protein level"/>
<organism>
    <name type="scientific">Homo sapiens</name>
    <name type="common">Human</name>
    <dbReference type="NCBI Taxonomy" id="9606"/>
    <lineage>
        <taxon>Eukaryota</taxon>
        <taxon>Metazoa</taxon>
        <taxon>Chordata</taxon>
        <taxon>Craniata</taxon>
        <taxon>Vertebrata</taxon>
        <taxon>Euteleostomi</taxon>
        <taxon>Mammalia</taxon>
        <taxon>Eutheria</taxon>
        <taxon>Euarchontoglires</taxon>
        <taxon>Primates</taxon>
        <taxon>Haplorrhini</taxon>
        <taxon>Catarrhini</taxon>
        <taxon>Hominidae</taxon>
        <taxon>Homo</taxon>
    </lineage>
</organism>
<dbReference type="EMBL" id="AC010369">
    <property type="status" value="NOT_ANNOTATED_CDS"/>
    <property type="molecule type" value="Genomic_DNA"/>
</dbReference>
<dbReference type="EMBL" id="AC106792">
    <property type="status" value="NOT_ANNOTATED_CDS"/>
    <property type="molecule type" value="Genomic_DNA"/>
</dbReference>
<dbReference type="EMBL" id="BC040527">
    <property type="status" value="NOT_ANNOTATED_CDS"/>
    <property type="molecule type" value="mRNA"/>
</dbReference>
<dbReference type="EMBL" id="AK093409">
    <property type="protein sequence ID" value="BAC04155.1"/>
    <property type="status" value="ALT_INIT"/>
    <property type="molecule type" value="mRNA"/>
</dbReference>
<dbReference type="EMBL" id="AK095646">
    <property type="protein sequence ID" value="BAC04596.1"/>
    <property type="molecule type" value="mRNA"/>
</dbReference>
<dbReference type="EMBL" id="AL833929">
    <property type="protein sequence ID" value="CAD38785.2"/>
    <property type="molecule type" value="mRNA"/>
</dbReference>
<dbReference type="EMBL" id="BX648687">
    <property type="protein sequence ID" value="CAH10561.1"/>
    <property type="status" value="ALT_INIT"/>
    <property type="molecule type" value="mRNA"/>
</dbReference>
<dbReference type="EMBL" id="CR627324">
    <property type="protein sequence ID" value="CAH10371.1"/>
    <property type="molecule type" value="mRNA"/>
</dbReference>
<dbReference type="CCDS" id="CCDS4134.2">
    <molecule id="Q8N960-1"/>
</dbReference>
<dbReference type="CCDS" id="CCDS54890.1">
    <molecule id="Q8N960-2"/>
</dbReference>
<dbReference type="RefSeq" id="NP_001159698.1">
    <molecule id="Q8N960-2"/>
    <property type="nucleotide sequence ID" value="NM_001166226.2"/>
</dbReference>
<dbReference type="RefSeq" id="NP_001362334.1">
    <molecule id="Q8N960-1"/>
    <property type="nucleotide sequence ID" value="NM_001375405.1"/>
</dbReference>
<dbReference type="RefSeq" id="NP_694955.2">
    <molecule id="Q8N960-1"/>
    <property type="nucleotide sequence ID" value="NM_153223.4"/>
</dbReference>
<dbReference type="RefSeq" id="XP_011541487.1">
    <molecule id="Q8N960-2"/>
    <property type="nucleotide sequence ID" value="XM_011543185.3"/>
</dbReference>
<dbReference type="RefSeq" id="XP_011541488.1">
    <property type="nucleotide sequence ID" value="XM_011543186.2"/>
</dbReference>
<dbReference type="RefSeq" id="XP_016864574.1">
    <property type="nucleotide sequence ID" value="XM_017009085.1"/>
</dbReference>
<dbReference type="RefSeq" id="XP_054207744.1">
    <molecule id="Q8N960-2"/>
    <property type="nucleotide sequence ID" value="XM_054351769.1"/>
</dbReference>
<dbReference type="PDB" id="4ICW">
    <property type="method" value="X-ray"/>
    <property type="resolution" value="2.20 A"/>
    <property type="chains" value="A=1-151"/>
</dbReference>
<dbReference type="PDB" id="4ICX">
    <property type="method" value="X-ray"/>
    <property type="resolution" value="2.70 A"/>
    <property type="chains" value="A/B/C=1-151"/>
</dbReference>
<dbReference type="PDB" id="6FLJ">
    <property type="method" value="X-ray"/>
    <property type="resolution" value="1.75 A"/>
    <property type="chains" value="A=1-151"/>
</dbReference>
<dbReference type="PDB" id="6FLK">
    <property type="method" value="X-ray"/>
    <property type="resolution" value="1.60 A"/>
    <property type="chains" value="A/B=450-610"/>
</dbReference>
<dbReference type="PDBsum" id="4ICW"/>
<dbReference type="PDBsum" id="4ICX"/>
<dbReference type="PDBsum" id="6FLJ"/>
<dbReference type="PDBsum" id="6FLK"/>
<dbReference type="SMR" id="Q8N960"/>
<dbReference type="BioGRID" id="127486">
    <property type="interactions" value="108"/>
</dbReference>
<dbReference type="FunCoup" id="Q8N960">
    <property type="interactions" value="1703"/>
</dbReference>
<dbReference type="IntAct" id="Q8N960">
    <property type="interactions" value="104"/>
</dbReference>
<dbReference type="STRING" id="9606.ENSP00000303058"/>
<dbReference type="MoonDB" id="Q8N960">
    <property type="type" value="Predicted"/>
</dbReference>
<dbReference type="iPTMnet" id="Q8N960"/>
<dbReference type="PhosphoSitePlus" id="Q8N960"/>
<dbReference type="BioMuta" id="CEP120"/>
<dbReference type="DMDM" id="205696377"/>
<dbReference type="jPOST" id="Q8N960"/>
<dbReference type="MassIVE" id="Q8N960"/>
<dbReference type="PaxDb" id="9606-ENSP00000303058"/>
<dbReference type="PeptideAtlas" id="Q8N960"/>
<dbReference type="ProteomicsDB" id="72491">
    <molecule id="Q8N960-1"/>
</dbReference>
<dbReference type="ProteomicsDB" id="72492">
    <molecule id="Q8N960-2"/>
</dbReference>
<dbReference type="ProteomicsDB" id="72493">
    <molecule id="Q8N960-3"/>
</dbReference>
<dbReference type="Pumba" id="Q8N960"/>
<dbReference type="Antibodypedia" id="25668">
    <property type="antibodies" value="75 antibodies from 17 providers"/>
</dbReference>
<dbReference type="DNASU" id="153241"/>
<dbReference type="Ensembl" id="ENST00000306467.10">
    <molecule id="Q8N960-1"/>
    <property type="protein sequence ID" value="ENSP00000303058.6"/>
    <property type="gene ID" value="ENSG00000168944.17"/>
</dbReference>
<dbReference type="Ensembl" id="ENST00000306481.11">
    <molecule id="Q8N960-2"/>
    <property type="protein sequence ID" value="ENSP00000307419.6"/>
    <property type="gene ID" value="ENSG00000168944.17"/>
</dbReference>
<dbReference type="Ensembl" id="ENST00000328236.10">
    <molecule id="Q8N960-1"/>
    <property type="protein sequence ID" value="ENSP00000327504.5"/>
    <property type="gene ID" value="ENSG00000168944.17"/>
</dbReference>
<dbReference type="Ensembl" id="ENST00000508442.7">
    <molecule id="Q8N960-2"/>
    <property type="protein sequence ID" value="ENSP00000421620.3"/>
    <property type="gene ID" value="ENSG00000168944.17"/>
</dbReference>
<dbReference type="Ensembl" id="ENST00000513565.6">
    <molecule id="Q8N960-3"/>
    <property type="protein sequence ID" value="ENSP00000422089.2"/>
    <property type="gene ID" value="ENSG00000168944.17"/>
</dbReference>
<dbReference type="GeneID" id="153241"/>
<dbReference type="KEGG" id="hsa:153241"/>
<dbReference type="MANE-Select" id="ENST00000306467.10">
    <property type="protein sequence ID" value="ENSP00000303058.6"/>
    <property type="RefSeq nucleotide sequence ID" value="NM_001375405.1"/>
    <property type="RefSeq protein sequence ID" value="NP_001362334.1"/>
</dbReference>
<dbReference type="UCSC" id="uc003ktk.4">
    <molecule id="Q8N960-1"/>
    <property type="organism name" value="human"/>
</dbReference>
<dbReference type="AGR" id="HGNC:26690"/>
<dbReference type="CTD" id="153241"/>
<dbReference type="DisGeNET" id="153241"/>
<dbReference type="GeneCards" id="CEP120"/>
<dbReference type="GeneReviews" id="CEP120"/>
<dbReference type="HGNC" id="HGNC:26690">
    <property type="gene designation" value="CEP120"/>
</dbReference>
<dbReference type="HPA" id="ENSG00000168944">
    <property type="expression patterns" value="Low tissue specificity"/>
</dbReference>
<dbReference type="MalaCards" id="CEP120"/>
<dbReference type="MIM" id="613446">
    <property type="type" value="gene"/>
</dbReference>
<dbReference type="MIM" id="616300">
    <property type="type" value="phenotype"/>
</dbReference>
<dbReference type="MIM" id="617761">
    <property type="type" value="phenotype"/>
</dbReference>
<dbReference type="neXtProt" id="NX_Q8N960"/>
<dbReference type="OpenTargets" id="ENSG00000168944"/>
<dbReference type="Orphanet" id="474">
    <property type="disease" value="Jeune syndrome"/>
</dbReference>
<dbReference type="Orphanet" id="475">
    <property type="disease" value="Joubert syndrome"/>
</dbReference>
<dbReference type="Orphanet" id="220493">
    <property type="disease" value="Joubert syndrome with ocular defect"/>
</dbReference>
<dbReference type="PharmGKB" id="PA164717857"/>
<dbReference type="VEuPathDB" id="HostDB:ENSG00000168944"/>
<dbReference type="eggNOG" id="ENOG502QPT0">
    <property type="taxonomic scope" value="Eukaryota"/>
</dbReference>
<dbReference type="GeneTree" id="ENSGT00390000009378"/>
<dbReference type="HOGENOM" id="CLU_723528_0_0_1"/>
<dbReference type="InParanoid" id="Q8N960"/>
<dbReference type="OMA" id="HTNQPEF"/>
<dbReference type="OrthoDB" id="332250at2759"/>
<dbReference type="PAN-GO" id="Q8N960">
    <property type="GO annotations" value="5 GO annotations based on evolutionary models"/>
</dbReference>
<dbReference type="PhylomeDB" id="Q8N960"/>
<dbReference type="TreeFam" id="TF329430"/>
<dbReference type="PathwayCommons" id="Q8N960"/>
<dbReference type="SignaLink" id="Q8N960"/>
<dbReference type="BioGRID-ORCS" id="153241">
    <property type="hits" value="34 hits in 1167 CRISPR screens"/>
</dbReference>
<dbReference type="ChiTaRS" id="CEP120">
    <property type="organism name" value="human"/>
</dbReference>
<dbReference type="EvolutionaryTrace" id="Q8N960"/>
<dbReference type="GeneWiki" id="CEP120"/>
<dbReference type="GenomeRNAi" id="153241"/>
<dbReference type="Pharos" id="Q8N960">
    <property type="development level" value="Tbio"/>
</dbReference>
<dbReference type="PRO" id="PR:Q8N960"/>
<dbReference type="Proteomes" id="UP000005640">
    <property type="component" value="Chromosome 5"/>
</dbReference>
<dbReference type="RNAct" id="Q8N960">
    <property type="molecule type" value="protein"/>
</dbReference>
<dbReference type="Bgee" id="ENSG00000168944">
    <property type="expression patterns" value="Expressed in calcaneal tendon and 183 other cell types or tissues"/>
</dbReference>
<dbReference type="ExpressionAtlas" id="Q8N960">
    <property type="expression patterns" value="baseline and differential"/>
</dbReference>
<dbReference type="GO" id="GO:0005814">
    <property type="term" value="C:centriole"/>
    <property type="evidence" value="ECO:0000250"/>
    <property type="project" value="UniProtKB"/>
</dbReference>
<dbReference type="GO" id="GO:0005813">
    <property type="term" value="C:centrosome"/>
    <property type="evidence" value="ECO:0000314"/>
    <property type="project" value="UniProtKB"/>
</dbReference>
<dbReference type="GO" id="GO:0005737">
    <property type="term" value="C:cytoplasm"/>
    <property type="evidence" value="ECO:0007669"/>
    <property type="project" value="UniProtKB-KW"/>
</dbReference>
<dbReference type="GO" id="GO:0030953">
    <property type="term" value="P:astral microtubule organization"/>
    <property type="evidence" value="ECO:0007669"/>
    <property type="project" value="Ensembl"/>
</dbReference>
<dbReference type="GO" id="GO:0007098">
    <property type="term" value="P:centrosome cycle"/>
    <property type="evidence" value="ECO:0000250"/>
    <property type="project" value="UniProtKB"/>
</dbReference>
<dbReference type="GO" id="GO:0021987">
    <property type="term" value="P:cerebral cortex development"/>
    <property type="evidence" value="ECO:0007669"/>
    <property type="project" value="Ensembl"/>
</dbReference>
<dbReference type="GO" id="GO:0022027">
    <property type="term" value="P:interkinetic nuclear migration"/>
    <property type="evidence" value="ECO:0000318"/>
    <property type="project" value="GO_Central"/>
</dbReference>
<dbReference type="GO" id="GO:0022008">
    <property type="term" value="P:neurogenesis"/>
    <property type="evidence" value="ECO:0007669"/>
    <property type="project" value="Ensembl"/>
</dbReference>
<dbReference type="GO" id="GO:1903724">
    <property type="term" value="P:positive regulation of centriole elongation"/>
    <property type="evidence" value="ECO:0000315"/>
    <property type="project" value="UniProtKB"/>
</dbReference>
<dbReference type="GO" id="GO:0010825">
    <property type="term" value="P:positive regulation of centrosome duplication"/>
    <property type="evidence" value="ECO:0000250"/>
    <property type="project" value="UniProtKB"/>
</dbReference>
<dbReference type="GO" id="GO:0045724">
    <property type="term" value="P:positive regulation of cilium assembly"/>
    <property type="evidence" value="ECO:0000250"/>
    <property type="project" value="UniProtKB"/>
</dbReference>
<dbReference type="GO" id="GO:1904951">
    <property type="term" value="P:positive regulation of establishment of protein localization"/>
    <property type="evidence" value="ECO:0000315"/>
    <property type="project" value="UniProtKB"/>
</dbReference>
<dbReference type="CDD" id="cd00030">
    <property type="entry name" value="C2"/>
    <property type="match status" value="1"/>
</dbReference>
<dbReference type="FunFam" id="2.60.40.150:FF:000112">
    <property type="entry name" value="centrosomal protein of 120 kDa isoform X1"/>
    <property type="match status" value="1"/>
</dbReference>
<dbReference type="Gene3D" id="2.60.40.150">
    <property type="entry name" value="C2 domain"/>
    <property type="match status" value="1"/>
</dbReference>
<dbReference type="InterPro" id="IPR000008">
    <property type="entry name" value="C2_dom"/>
</dbReference>
<dbReference type="InterPro" id="IPR035892">
    <property type="entry name" value="C2_domain_sf"/>
</dbReference>
<dbReference type="InterPro" id="IPR039893">
    <property type="entry name" value="CEP120-like"/>
</dbReference>
<dbReference type="InterPro" id="IPR022136">
    <property type="entry name" value="DUF3668"/>
</dbReference>
<dbReference type="PANTHER" id="PTHR21574">
    <property type="entry name" value="CENTROSOMAL PROTEIN OF 120 KDA"/>
    <property type="match status" value="1"/>
</dbReference>
<dbReference type="PANTHER" id="PTHR21574:SF0">
    <property type="entry name" value="CENTROSOMAL PROTEIN OF 120 KDA"/>
    <property type="match status" value="1"/>
</dbReference>
<dbReference type="Pfam" id="PF00168">
    <property type="entry name" value="C2"/>
    <property type="match status" value="2"/>
</dbReference>
<dbReference type="Pfam" id="PF12416">
    <property type="entry name" value="DUF3668"/>
    <property type="match status" value="1"/>
</dbReference>
<dbReference type="SUPFAM" id="SSF49562">
    <property type="entry name" value="C2 domain (Calcium/lipid-binding domain, CaLB)"/>
    <property type="match status" value="1"/>
</dbReference>
<dbReference type="PROSITE" id="PS50004">
    <property type="entry name" value="C2"/>
    <property type="match status" value="2"/>
</dbReference>